<dbReference type="EC" id="2.7.7.18" evidence="1"/>
<dbReference type="EMBL" id="AE015928">
    <property type="protein sequence ID" value="AAO77118.1"/>
    <property type="molecule type" value="Genomic_DNA"/>
</dbReference>
<dbReference type="RefSeq" id="NP_810924.1">
    <property type="nucleotide sequence ID" value="NC_004663.1"/>
</dbReference>
<dbReference type="RefSeq" id="WP_008761100.1">
    <property type="nucleotide sequence ID" value="NC_004663.1"/>
</dbReference>
<dbReference type="SMR" id="Q8A675"/>
<dbReference type="FunCoup" id="Q8A675">
    <property type="interactions" value="304"/>
</dbReference>
<dbReference type="STRING" id="226186.BT_2011"/>
<dbReference type="PaxDb" id="226186-BT_2011"/>
<dbReference type="EnsemblBacteria" id="AAO77118">
    <property type="protein sequence ID" value="AAO77118"/>
    <property type="gene ID" value="BT_2011"/>
</dbReference>
<dbReference type="GeneID" id="60927996"/>
<dbReference type="KEGG" id="bth:BT_2011"/>
<dbReference type="PATRIC" id="fig|226186.12.peg.2063"/>
<dbReference type="eggNOG" id="COG1057">
    <property type="taxonomic scope" value="Bacteria"/>
</dbReference>
<dbReference type="HOGENOM" id="CLU_069765_3_3_10"/>
<dbReference type="InParanoid" id="Q8A675"/>
<dbReference type="OrthoDB" id="5295945at2"/>
<dbReference type="UniPathway" id="UPA00253">
    <property type="reaction ID" value="UER00332"/>
</dbReference>
<dbReference type="Proteomes" id="UP000001414">
    <property type="component" value="Chromosome"/>
</dbReference>
<dbReference type="GO" id="GO:0005524">
    <property type="term" value="F:ATP binding"/>
    <property type="evidence" value="ECO:0007669"/>
    <property type="project" value="UniProtKB-KW"/>
</dbReference>
<dbReference type="GO" id="GO:0000309">
    <property type="term" value="F:nicotinamide-nucleotide adenylyltransferase activity"/>
    <property type="evidence" value="ECO:0000318"/>
    <property type="project" value="GO_Central"/>
</dbReference>
<dbReference type="GO" id="GO:0004515">
    <property type="term" value="F:nicotinate-nucleotide adenylyltransferase activity"/>
    <property type="evidence" value="ECO:0000318"/>
    <property type="project" value="GO_Central"/>
</dbReference>
<dbReference type="GO" id="GO:0009435">
    <property type="term" value="P:NAD biosynthetic process"/>
    <property type="evidence" value="ECO:0000318"/>
    <property type="project" value="GO_Central"/>
</dbReference>
<dbReference type="CDD" id="cd02165">
    <property type="entry name" value="NMNAT"/>
    <property type="match status" value="1"/>
</dbReference>
<dbReference type="FunFam" id="3.40.50.620:FF:000251">
    <property type="entry name" value="Probable nicotinate-nucleotide adenylyltransferase"/>
    <property type="match status" value="1"/>
</dbReference>
<dbReference type="Gene3D" id="3.40.50.620">
    <property type="entry name" value="HUPs"/>
    <property type="match status" value="1"/>
</dbReference>
<dbReference type="HAMAP" id="MF_00244">
    <property type="entry name" value="NaMN_adenylyltr"/>
    <property type="match status" value="1"/>
</dbReference>
<dbReference type="InterPro" id="IPR004821">
    <property type="entry name" value="Cyt_trans-like"/>
</dbReference>
<dbReference type="InterPro" id="IPR005248">
    <property type="entry name" value="NadD/NMNAT"/>
</dbReference>
<dbReference type="InterPro" id="IPR014729">
    <property type="entry name" value="Rossmann-like_a/b/a_fold"/>
</dbReference>
<dbReference type="NCBIfam" id="TIGR00482">
    <property type="entry name" value="nicotinate (nicotinamide) nucleotide adenylyltransferase"/>
    <property type="match status" value="1"/>
</dbReference>
<dbReference type="PANTHER" id="PTHR39321">
    <property type="entry name" value="NICOTINATE-NUCLEOTIDE ADENYLYLTRANSFERASE-RELATED"/>
    <property type="match status" value="1"/>
</dbReference>
<dbReference type="PANTHER" id="PTHR39321:SF3">
    <property type="entry name" value="PHOSPHOPANTETHEINE ADENYLYLTRANSFERASE"/>
    <property type="match status" value="1"/>
</dbReference>
<dbReference type="Pfam" id="PF01467">
    <property type="entry name" value="CTP_transf_like"/>
    <property type="match status" value="1"/>
</dbReference>
<dbReference type="SUPFAM" id="SSF52374">
    <property type="entry name" value="Nucleotidylyl transferase"/>
    <property type="match status" value="1"/>
</dbReference>
<reference key="1">
    <citation type="journal article" date="2003" name="Science">
        <title>A genomic view of the human-Bacteroides thetaiotaomicron symbiosis.</title>
        <authorList>
            <person name="Xu J."/>
            <person name="Bjursell M.K."/>
            <person name="Himrod J."/>
            <person name="Deng S."/>
            <person name="Carmichael L.K."/>
            <person name="Chiang H.C."/>
            <person name="Hooper L.V."/>
            <person name="Gordon J.I."/>
        </authorList>
    </citation>
    <scope>NUCLEOTIDE SEQUENCE [LARGE SCALE GENOMIC DNA]</scope>
    <source>
        <strain>ATCC 29148 / DSM 2079 / JCM 5827 / CCUG 10774 / NCTC 10582 / VPI-5482 / E50</strain>
    </source>
</reference>
<proteinExistence type="inferred from homology"/>
<protein>
    <recommendedName>
        <fullName evidence="1">Probable nicotinate-nucleotide adenylyltransferase</fullName>
        <ecNumber evidence="1">2.7.7.18</ecNumber>
    </recommendedName>
    <alternativeName>
        <fullName evidence="1">Deamido-NAD(+) diphosphorylase</fullName>
    </alternativeName>
    <alternativeName>
        <fullName evidence="1">Deamido-NAD(+) pyrophosphorylase</fullName>
    </alternativeName>
    <alternativeName>
        <fullName evidence="1">Nicotinate mononucleotide adenylyltransferase</fullName>
        <shortName evidence="1">NaMN adenylyltransferase</shortName>
    </alternativeName>
</protein>
<name>NADD_BACTN</name>
<comment type="function">
    <text evidence="1">Catalyzes the reversible adenylation of nicotinate mononucleotide (NaMN) to nicotinic acid adenine dinucleotide (NaAD).</text>
</comment>
<comment type="catalytic activity">
    <reaction evidence="1">
        <text>nicotinate beta-D-ribonucleotide + ATP + H(+) = deamido-NAD(+) + diphosphate</text>
        <dbReference type="Rhea" id="RHEA:22860"/>
        <dbReference type="ChEBI" id="CHEBI:15378"/>
        <dbReference type="ChEBI" id="CHEBI:30616"/>
        <dbReference type="ChEBI" id="CHEBI:33019"/>
        <dbReference type="ChEBI" id="CHEBI:57502"/>
        <dbReference type="ChEBI" id="CHEBI:58437"/>
        <dbReference type="EC" id="2.7.7.18"/>
    </reaction>
</comment>
<comment type="pathway">
    <text evidence="1">Cofactor biosynthesis; NAD(+) biosynthesis; deamido-NAD(+) from nicotinate D-ribonucleotide: step 1/1.</text>
</comment>
<comment type="similarity">
    <text evidence="1">Belongs to the NadD family.</text>
</comment>
<sequence>MRMAESNKLKTGIFSGSFNPVHIGHLALANYLCEYEELDEVWFMVSPQNPLKAGTELWPDDLRLRLVELATEEYPRFRSSDFEFHLPRPSYSVHTLEKLHETYPERDFYLIIGSDNWARFDRWYQSERIIKENRILIYPRPGFPVNENGLPETVRLVHSPTFEISSTFIRQALDEKKDVRYFLHPKVWEYIREYIRQSITDN</sequence>
<keyword id="KW-0067">ATP-binding</keyword>
<keyword id="KW-0520">NAD</keyword>
<keyword id="KW-0547">Nucleotide-binding</keyword>
<keyword id="KW-0548">Nucleotidyltransferase</keyword>
<keyword id="KW-0662">Pyridine nucleotide biosynthesis</keyword>
<keyword id="KW-1185">Reference proteome</keyword>
<keyword id="KW-0808">Transferase</keyword>
<accession>Q8A675</accession>
<evidence type="ECO:0000255" key="1">
    <source>
        <dbReference type="HAMAP-Rule" id="MF_00244"/>
    </source>
</evidence>
<organism>
    <name type="scientific">Bacteroides thetaiotaomicron (strain ATCC 29148 / DSM 2079 / JCM 5827 / CCUG 10774 / NCTC 10582 / VPI-5482 / E50)</name>
    <dbReference type="NCBI Taxonomy" id="226186"/>
    <lineage>
        <taxon>Bacteria</taxon>
        <taxon>Pseudomonadati</taxon>
        <taxon>Bacteroidota</taxon>
        <taxon>Bacteroidia</taxon>
        <taxon>Bacteroidales</taxon>
        <taxon>Bacteroidaceae</taxon>
        <taxon>Bacteroides</taxon>
    </lineage>
</organism>
<gene>
    <name evidence="1" type="primary">nadD</name>
    <name type="ordered locus">BT_2011</name>
</gene>
<feature type="chain" id="PRO_0000181388" description="Probable nicotinate-nucleotide adenylyltransferase">
    <location>
        <begin position="1"/>
        <end position="202"/>
    </location>
</feature>